<feature type="chain" id="PRO_0000377342" description="tRNA dimethylallyltransferase">
    <location>
        <begin position="1"/>
        <end position="301"/>
    </location>
</feature>
<feature type="region of interest" description="Interaction with substrate tRNA" evidence="1">
    <location>
        <begin position="37"/>
        <end position="40"/>
    </location>
</feature>
<feature type="binding site" evidence="1">
    <location>
        <begin position="12"/>
        <end position="19"/>
    </location>
    <ligand>
        <name>ATP</name>
        <dbReference type="ChEBI" id="CHEBI:30616"/>
    </ligand>
</feature>
<feature type="binding site" evidence="1">
    <location>
        <begin position="14"/>
        <end position="19"/>
    </location>
    <ligand>
        <name>substrate</name>
    </ligand>
</feature>
<feature type="site" description="Interaction with substrate tRNA" evidence="1">
    <location>
        <position position="103"/>
    </location>
</feature>
<feature type="site" description="Interaction with substrate tRNA" evidence="1">
    <location>
        <position position="126"/>
    </location>
</feature>
<proteinExistence type="inferred from homology"/>
<reference key="1">
    <citation type="journal article" date="2007" name="Proc. Natl. Acad. Sci. U.S.A.">
        <title>Deep-sea vent epsilon-proteobacterial genomes provide insights into emergence of pathogens.</title>
        <authorList>
            <person name="Nakagawa S."/>
            <person name="Takaki Y."/>
            <person name="Shimamura S."/>
            <person name="Reysenbach A.-L."/>
            <person name="Takai K."/>
            <person name="Horikoshi K."/>
        </authorList>
    </citation>
    <scope>NUCLEOTIDE SEQUENCE [LARGE SCALE GENOMIC DNA]</scope>
    <source>
        <strain>NBC37-1</strain>
    </source>
</reference>
<dbReference type="EC" id="2.5.1.75" evidence="1"/>
<dbReference type="EMBL" id="AP009179">
    <property type="protein sequence ID" value="BAF73157.1"/>
    <property type="molecule type" value="Genomic_DNA"/>
</dbReference>
<dbReference type="RefSeq" id="WP_012083991.1">
    <property type="nucleotide sequence ID" value="NC_009663.1"/>
</dbReference>
<dbReference type="SMR" id="A6QCE8"/>
<dbReference type="STRING" id="387093.SUN_2217"/>
<dbReference type="KEGG" id="sun:SUN_2217"/>
<dbReference type="eggNOG" id="COG0324">
    <property type="taxonomic scope" value="Bacteria"/>
</dbReference>
<dbReference type="HOGENOM" id="CLU_032616_0_1_7"/>
<dbReference type="OrthoDB" id="9776390at2"/>
<dbReference type="Proteomes" id="UP000006378">
    <property type="component" value="Chromosome"/>
</dbReference>
<dbReference type="GO" id="GO:0005524">
    <property type="term" value="F:ATP binding"/>
    <property type="evidence" value="ECO:0007669"/>
    <property type="project" value="UniProtKB-UniRule"/>
</dbReference>
<dbReference type="GO" id="GO:0052381">
    <property type="term" value="F:tRNA dimethylallyltransferase activity"/>
    <property type="evidence" value="ECO:0007669"/>
    <property type="project" value="UniProtKB-UniRule"/>
</dbReference>
<dbReference type="GO" id="GO:0006400">
    <property type="term" value="P:tRNA modification"/>
    <property type="evidence" value="ECO:0007669"/>
    <property type="project" value="TreeGrafter"/>
</dbReference>
<dbReference type="Gene3D" id="1.10.20.140">
    <property type="match status" value="1"/>
</dbReference>
<dbReference type="Gene3D" id="3.40.50.300">
    <property type="entry name" value="P-loop containing nucleotide triphosphate hydrolases"/>
    <property type="match status" value="1"/>
</dbReference>
<dbReference type="HAMAP" id="MF_00185">
    <property type="entry name" value="IPP_trans"/>
    <property type="match status" value="1"/>
</dbReference>
<dbReference type="InterPro" id="IPR039657">
    <property type="entry name" value="Dimethylallyltransferase"/>
</dbReference>
<dbReference type="InterPro" id="IPR018022">
    <property type="entry name" value="IPT"/>
</dbReference>
<dbReference type="InterPro" id="IPR027417">
    <property type="entry name" value="P-loop_NTPase"/>
</dbReference>
<dbReference type="NCBIfam" id="TIGR00174">
    <property type="entry name" value="miaA"/>
    <property type="match status" value="1"/>
</dbReference>
<dbReference type="PANTHER" id="PTHR11088">
    <property type="entry name" value="TRNA DIMETHYLALLYLTRANSFERASE"/>
    <property type="match status" value="1"/>
</dbReference>
<dbReference type="PANTHER" id="PTHR11088:SF60">
    <property type="entry name" value="TRNA DIMETHYLALLYLTRANSFERASE"/>
    <property type="match status" value="1"/>
</dbReference>
<dbReference type="Pfam" id="PF01715">
    <property type="entry name" value="IPPT"/>
    <property type="match status" value="1"/>
</dbReference>
<dbReference type="SUPFAM" id="SSF52540">
    <property type="entry name" value="P-loop containing nucleoside triphosphate hydrolases"/>
    <property type="match status" value="1"/>
</dbReference>
<comment type="function">
    <text evidence="1">Catalyzes the transfer of a dimethylallyl group onto the adenine at position 37 in tRNAs that read codons beginning with uridine, leading to the formation of N6-(dimethylallyl)adenosine (i(6)A).</text>
</comment>
<comment type="catalytic activity">
    <reaction evidence="1">
        <text>adenosine(37) in tRNA + dimethylallyl diphosphate = N(6)-dimethylallyladenosine(37) in tRNA + diphosphate</text>
        <dbReference type="Rhea" id="RHEA:26482"/>
        <dbReference type="Rhea" id="RHEA-COMP:10162"/>
        <dbReference type="Rhea" id="RHEA-COMP:10375"/>
        <dbReference type="ChEBI" id="CHEBI:33019"/>
        <dbReference type="ChEBI" id="CHEBI:57623"/>
        <dbReference type="ChEBI" id="CHEBI:74411"/>
        <dbReference type="ChEBI" id="CHEBI:74415"/>
        <dbReference type="EC" id="2.5.1.75"/>
    </reaction>
</comment>
<comment type="cofactor">
    <cofactor evidence="1">
        <name>Mg(2+)</name>
        <dbReference type="ChEBI" id="CHEBI:18420"/>
    </cofactor>
</comment>
<comment type="subunit">
    <text evidence="1">Monomer.</text>
</comment>
<comment type="similarity">
    <text evidence="1">Belongs to the IPP transferase family.</text>
</comment>
<keyword id="KW-0067">ATP-binding</keyword>
<keyword id="KW-0460">Magnesium</keyword>
<keyword id="KW-0547">Nucleotide-binding</keyword>
<keyword id="KW-0808">Transferase</keyword>
<keyword id="KW-0819">tRNA processing</keyword>
<gene>
    <name evidence="1" type="primary">miaA</name>
    <name type="ordered locus">SUN_2217</name>
</gene>
<accession>A6QCE8</accession>
<name>MIAA_SULNB</name>
<evidence type="ECO:0000255" key="1">
    <source>
        <dbReference type="HAMAP-Rule" id="MF_00185"/>
    </source>
</evidence>
<protein>
    <recommendedName>
        <fullName evidence="1">tRNA dimethylallyltransferase</fullName>
        <ecNumber evidence="1">2.5.1.75</ecNumber>
    </recommendedName>
    <alternativeName>
        <fullName evidence="1">Dimethylallyl diphosphate:tRNA dimethylallyltransferase</fullName>
        <shortName evidence="1">DMAPP:tRNA dimethylallyltransferase</shortName>
        <shortName evidence="1">DMATase</shortName>
    </alternativeName>
    <alternativeName>
        <fullName evidence="1">Isopentenyl-diphosphate:tRNA isopentenyltransferase</fullName>
        <shortName evidence="1">IPP transferase</shortName>
        <shortName evidence="1">IPPT</shortName>
        <shortName evidence="1">IPTase</shortName>
    </alternativeName>
</protein>
<sequence>MNQPIRQLALIGPTASGKTALAIKAAQALDAHILSIDSLSIYKEIDIVSAKPTKEEQKGIKHFGIDFIAPNEDFDVTTFIRLYEDVHVRAVADNKNLVIVGGTSFYLKMLMEGISKLPKISETTKRRTTEALRDLQKSHEWLSTLDPDYMQKISSSDPYRIEKALDIYFETGTCPTEYFKAFPPKPTIQSELPIYQIETDRELLRKRISLRTQMMLEDGLIDEICMLEEKYTRAPNCMKAIGIKETLAYLDGIYEREMLKEKITVNTARLAKRQTTFNHSQFDNVIKGSVSELEKILLQGA</sequence>
<organism>
    <name type="scientific">Sulfurovum sp. (strain NBC37-1)</name>
    <dbReference type="NCBI Taxonomy" id="387093"/>
    <lineage>
        <taxon>Bacteria</taxon>
        <taxon>Pseudomonadati</taxon>
        <taxon>Campylobacterota</taxon>
        <taxon>Epsilonproteobacteria</taxon>
        <taxon>Campylobacterales</taxon>
        <taxon>Sulfurovaceae</taxon>
        <taxon>Sulfurovum</taxon>
    </lineage>
</organism>